<protein>
    <recommendedName>
        <fullName evidence="1">Probable cytosol aminopeptidase</fullName>
        <ecNumber evidence="1">3.4.11.1</ecNumber>
    </recommendedName>
    <alternativeName>
        <fullName evidence="1">Leucine aminopeptidase</fullName>
        <shortName evidence="1">LAP</shortName>
        <ecNumber evidence="1">3.4.11.10</ecNumber>
    </alternativeName>
    <alternativeName>
        <fullName evidence="1">Leucyl aminopeptidase</fullName>
    </alternativeName>
</protein>
<keyword id="KW-0031">Aminopeptidase</keyword>
<keyword id="KW-0963">Cytoplasm</keyword>
<keyword id="KW-0378">Hydrolase</keyword>
<keyword id="KW-0464">Manganese</keyword>
<keyword id="KW-0479">Metal-binding</keyword>
<keyword id="KW-0645">Protease</keyword>
<name>AMPA_CUPPJ</name>
<evidence type="ECO:0000255" key="1">
    <source>
        <dbReference type="HAMAP-Rule" id="MF_00181"/>
    </source>
</evidence>
<organism>
    <name type="scientific">Cupriavidus pinatubonensis (strain JMP 134 / LMG 1197)</name>
    <name type="common">Cupriavidus necator (strain JMP 134)</name>
    <dbReference type="NCBI Taxonomy" id="264198"/>
    <lineage>
        <taxon>Bacteria</taxon>
        <taxon>Pseudomonadati</taxon>
        <taxon>Pseudomonadota</taxon>
        <taxon>Betaproteobacteria</taxon>
        <taxon>Burkholderiales</taxon>
        <taxon>Burkholderiaceae</taxon>
        <taxon>Cupriavidus</taxon>
    </lineage>
</organism>
<accession>Q46XT9</accession>
<sequence length="510" mass="53931">MEFSTKALDWSKAGQNGFLATKTDCLVVGVFEGQNLAGVAKALDVATKGLVARLLKQGDFEGKRGTQLTLHEVAGVGAARVLLVGLGKEADFNDKAFAEAVRTAVRALSSTRATSALWCLSQQPPQQRDIGWAVITTISLVRDAGYRLLERHPGLKRANGKPGAADKATLRKVVLAVDANDAKAATQAVVRGTAIANGMELTRDLGNLPSNICTPTYLANTARAIAKRHKLKVEVLGRKQIEALNMGSFLAVTKGSVEPPQFIVLRYDGAGAKQAPVVLVGKGITFDTGGISLKPGEGMDEMKYDMCGAASVLGTLQAVAEMGLKLNVIAVVPTCENMPSGVATKPGDVVTSMSGQTIEILNTDAEGRLILCDALTYVERFKPAAVVDVATLTGACIIALGHINTGLYARSDMLADQLLQAGRKSMDTAWRMPLDDEYQDQLKSNFADMANIGGRPAGSVTAACFLARFTEKYDWAHLDIAGTAWKSGAAKGATGRPVPLLTQFLMDRAA</sequence>
<comment type="function">
    <text evidence="1">Presumably involved in the processing and regular turnover of intracellular proteins. Catalyzes the removal of unsubstituted N-terminal amino acids from various peptides.</text>
</comment>
<comment type="catalytic activity">
    <reaction evidence="1">
        <text>Release of an N-terminal amino acid, Xaa-|-Yaa-, in which Xaa is preferably Leu, but may be other amino acids including Pro although not Arg or Lys, and Yaa may be Pro. Amino acid amides and methyl esters are also readily hydrolyzed, but rates on arylamides are exceedingly low.</text>
        <dbReference type="EC" id="3.4.11.1"/>
    </reaction>
</comment>
<comment type="catalytic activity">
    <reaction evidence="1">
        <text>Release of an N-terminal amino acid, preferentially leucine, but not glutamic or aspartic acids.</text>
        <dbReference type="EC" id="3.4.11.10"/>
    </reaction>
</comment>
<comment type="cofactor">
    <cofactor evidence="1">
        <name>Mn(2+)</name>
        <dbReference type="ChEBI" id="CHEBI:29035"/>
    </cofactor>
    <text evidence="1">Binds 2 manganese ions per subunit.</text>
</comment>
<comment type="subcellular location">
    <subcellularLocation>
        <location evidence="1">Cytoplasm</location>
    </subcellularLocation>
</comment>
<comment type="similarity">
    <text evidence="1">Belongs to the peptidase M17 family.</text>
</comment>
<dbReference type="EC" id="3.4.11.1" evidence="1"/>
<dbReference type="EC" id="3.4.11.10" evidence="1"/>
<dbReference type="EMBL" id="CP000090">
    <property type="protein sequence ID" value="AAZ62044.1"/>
    <property type="molecule type" value="Genomic_DNA"/>
</dbReference>
<dbReference type="SMR" id="Q46XT9"/>
<dbReference type="STRING" id="264198.Reut_A2683"/>
<dbReference type="MEROPS" id="M17.003"/>
<dbReference type="KEGG" id="reu:Reut_A2683"/>
<dbReference type="eggNOG" id="COG0260">
    <property type="taxonomic scope" value="Bacteria"/>
</dbReference>
<dbReference type="HOGENOM" id="CLU_013734_2_2_4"/>
<dbReference type="OrthoDB" id="9809354at2"/>
<dbReference type="GO" id="GO:0005737">
    <property type="term" value="C:cytoplasm"/>
    <property type="evidence" value="ECO:0007669"/>
    <property type="project" value="UniProtKB-SubCell"/>
</dbReference>
<dbReference type="GO" id="GO:0030145">
    <property type="term" value="F:manganese ion binding"/>
    <property type="evidence" value="ECO:0007669"/>
    <property type="project" value="UniProtKB-UniRule"/>
</dbReference>
<dbReference type="GO" id="GO:0070006">
    <property type="term" value="F:metalloaminopeptidase activity"/>
    <property type="evidence" value="ECO:0007669"/>
    <property type="project" value="InterPro"/>
</dbReference>
<dbReference type="GO" id="GO:0006508">
    <property type="term" value="P:proteolysis"/>
    <property type="evidence" value="ECO:0007669"/>
    <property type="project" value="UniProtKB-KW"/>
</dbReference>
<dbReference type="CDD" id="cd00433">
    <property type="entry name" value="Peptidase_M17"/>
    <property type="match status" value="1"/>
</dbReference>
<dbReference type="FunFam" id="3.40.630.10:FF:000004">
    <property type="entry name" value="Probable cytosol aminopeptidase"/>
    <property type="match status" value="1"/>
</dbReference>
<dbReference type="Gene3D" id="3.40.220.10">
    <property type="entry name" value="Leucine Aminopeptidase, subunit E, domain 1"/>
    <property type="match status" value="1"/>
</dbReference>
<dbReference type="Gene3D" id="3.40.630.10">
    <property type="entry name" value="Zn peptidases"/>
    <property type="match status" value="1"/>
</dbReference>
<dbReference type="HAMAP" id="MF_00181">
    <property type="entry name" value="Cytosol_peptidase_M17"/>
    <property type="match status" value="1"/>
</dbReference>
<dbReference type="InterPro" id="IPR011356">
    <property type="entry name" value="Leucine_aapep/pepB"/>
</dbReference>
<dbReference type="InterPro" id="IPR043472">
    <property type="entry name" value="Macro_dom-like"/>
</dbReference>
<dbReference type="InterPro" id="IPR000819">
    <property type="entry name" value="Peptidase_M17_C"/>
</dbReference>
<dbReference type="InterPro" id="IPR023042">
    <property type="entry name" value="Peptidase_M17_leu_NH2_pept"/>
</dbReference>
<dbReference type="InterPro" id="IPR008283">
    <property type="entry name" value="Peptidase_M17_N"/>
</dbReference>
<dbReference type="NCBIfam" id="NF002073">
    <property type="entry name" value="PRK00913.1-2"/>
    <property type="match status" value="1"/>
</dbReference>
<dbReference type="NCBIfam" id="NF002074">
    <property type="entry name" value="PRK00913.1-4"/>
    <property type="match status" value="1"/>
</dbReference>
<dbReference type="NCBIfam" id="NF002077">
    <property type="entry name" value="PRK00913.2-4"/>
    <property type="match status" value="1"/>
</dbReference>
<dbReference type="PANTHER" id="PTHR11963:SF23">
    <property type="entry name" value="CYTOSOL AMINOPEPTIDASE"/>
    <property type="match status" value="1"/>
</dbReference>
<dbReference type="PANTHER" id="PTHR11963">
    <property type="entry name" value="LEUCINE AMINOPEPTIDASE-RELATED"/>
    <property type="match status" value="1"/>
</dbReference>
<dbReference type="Pfam" id="PF00883">
    <property type="entry name" value="Peptidase_M17"/>
    <property type="match status" value="1"/>
</dbReference>
<dbReference type="Pfam" id="PF02789">
    <property type="entry name" value="Peptidase_M17_N"/>
    <property type="match status" value="1"/>
</dbReference>
<dbReference type="PRINTS" id="PR00481">
    <property type="entry name" value="LAMNOPPTDASE"/>
</dbReference>
<dbReference type="SUPFAM" id="SSF52949">
    <property type="entry name" value="Macro domain-like"/>
    <property type="match status" value="1"/>
</dbReference>
<dbReference type="SUPFAM" id="SSF53187">
    <property type="entry name" value="Zn-dependent exopeptidases"/>
    <property type="match status" value="1"/>
</dbReference>
<dbReference type="PROSITE" id="PS00631">
    <property type="entry name" value="CYTOSOL_AP"/>
    <property type="match status" value="1"/>
</dbReference>
<feature type="chain" id="PRO_1000019963" description="Probable cytosol aminopeptidase">
    <location>
        <begin position="1"/>
        <end position="510"/>
    </location>
</feature>
<feature type="active site" evidence="1">
    <location>
        <position position="294"/>
    </location>
</feature>
<feature type="active site" evidence="1">
    <location>
        <position position="368"/>
    </location>
</feature>
<feature type="binding site" evidence="1">
    <location>
        <position position="282"/>
    </location>
    <ligand>
        <name>Mn(2+)</name>
        <dbReference type="ChEBI" id="CHEBI:29035"/>
        <label>2</label>
    </ligand>
</feature>
<feature type="binding site" evidence="1">
    <location>
        <position position="287"/>
    </location>
    <ligand>
        <name>Mn(2+)</name>
        <dbReference type="ChEBI" id="CHEBI:29035"/>
        <label>1</label>
    </ligand>
</feature>
<feature type="binding site" evidence="1">
    <location>
        <position position="287"/>
    </location>
    <ligand>
        <name>Mn(2+)</name>
        <dbReference type="ChEBI" id="CHEBI:29035"/>
        <label>2</label>
    </ligand>
</feature>
<feature type="binding site" evidence="1">
    <location>
        <position position="305"/>
    </location>
    <ligand>
        <name>Mn(2+)</name>
        <dbReference type="ChEBI" id="CHEBI:29035"/>
        <label>2</label>
    </ligand>
</feature>
<feature type="binding site" evidence="1">
    <location>
        <position position="364"/>
    </location>
    <ligand>
        <name>Mn(2+)</name>
        <dbReference type="ChEBI" id="CHEBI:29035"/>
        <label>1</label>
    </ligand>
</feature>
<feature type="binding site" evidence="1">
    <location>
        <position position="366"/>
    </location>
    <ligand>
        <name>Mn(2+)</name>
        <dbReference type="ChEBI" id="CHEBI:29035"/>
        <label>1</label>
    </ligand>
</feature>
<feature type="binding site" evidence="1">
    <location>
        <position position="366"/>
    </location>
    <ligand>
        <name>Mn(2+)</name>
        <dbReference type="ChEBI" id="CHEBI:29035"/>
        <label>2</label>
    </ligand>
</feature>
<reference key="1">
    <citation type="journal article" date="2010" name="PLoS ONE">
        <title>The complete multipartite genome sequence of Cupriavidus necator JMP134, a versatile pollutant degrader.</title>
        <authorList>
            <person name="Lykidis A."/>
            <person name="Perez-Pantoja D."/>
            <person name="Ledger T."/>
            <person name="Mavromatis K."/>
            <person name="Anderson I.J."/>
            <person name="Ivanova N.N."/>
            <person name="Hooper S.D."/>
            <person name="Lapidus A."/>
            <person name="Lucas S."/>
            <person name="Gonzalez B."/>
            <person name="Kyrpides N.C."/>
        </authorList>
    </citation>
    <scope>NUCLEOTIDE SEQUENCE [LARGE SCALE GENOMIC DNA]</scope>
    <source>
        <strain>JMP134 / LMG 1197</strain>
    </source>
</reference>
<proteinExistence type="inferred from homology"/>
<gene>
    <name evidence="1" type="primary">pepA</name>
    <name type="ordered locus">Reut_A2683</name>
</gene>